<comment type="catalytic activity">
    <reaction evidence="1">
        <text>2-(N(omega)-L-arginino)succinate = fumarate + L-arginine</text>
        <dbReference type="Rhea" id="RHEA:24020"/>
        <dbReference type="ChEBI" id="CHEBI:29806"/>
        <dbReference type="ChEBI" id="CHEBI:32682"/>
        <dbReference type="ChEBI" id="CHEBI:57472"/>
        <dbReference type="EC" id="4.3.2.1"/>
    </reaction>
</comment>
<comment type="pathway">
    <text evidence="1">Amino-acid biosynthesis; L-arginine biosynthesis; L-arginine from L-ornithine and carbamoyl phosphate: step 3/3.</text>
</comment>
<comment type="subcellular location">
    <subcellularLocation>
        <location evidence="1">Cytoplasm</location>
    </subcellularLocation>
</comment>
<comment type="similarity">
    <text evidence="1">Belongs to the lyase 1 family. Argininosuccinate lyase subfamily.</text>
</comment>
<keyword id="KW-0028">Amino-acid biosynthesis</keyword>
<keyword id="KW-0055">Arginine biosynthesis</keyword>
<keyword id="KW-0963">Cytoplasm</keyword>
<keyword id="KW-0456">Lyase</keyword>
<proteinExistence type="inferred from homology"/>
<feature type="chain" id="PRO_1000116350" description="Argininosuccinate lyase">
    <location>
        <begin position="1"/>
        <end position="458"/>
    </location>
</feature>
<accession>C3LRV2</accession>
<organism>
    <name type="scientific">Vibrio cholerae serotype O1 (strain M66-2)</name>
    <dbReference type="NCBI Taxonomy" id="579112"/>
    <lineage>
        <taxon>Bacteria</taxon>
        <taxon>Pseudomonadati</taxon>
        <taxon>Pseudomonadota</taxon>
        <taxon>Gammaproteobacteria</taxon>
        <taxon>Vibrionales</taxon>
        <taxon>Vibrionaceae</taxon>
        <taxon>Vibrio</taxon>
    </lineage>
</organism>
<name>ARLY_VIBCM</name>
<gene>
    <name evidence="1" type="primary">argH</name>
    <name type="ordered locus">VCM66_2561</name>
</gene>
<evidence type="ECO:0000255" key="1">
    <source>
        <dbReference type="HAMAP-Rule" id="MF_00006"/>
    </source>
</evidence>
<reference key="1">
    <citation type="journal article" date="2008" name="PLoS ONE">
        <title>A recalibrated molecular clock and independent origins for the cholera pandemic clones.</title>
        <authorList>
            <person name="Feng L."/>
            <person name="Reeves P.R."/>
            <person name="Lan R."/>
            <person name="Ren Y."/>
            <person name="Gao C."/>
            <person name="Zhou Z."/>
            <person name="Ren Y."/>
            <person name="Cheng J."/>
            <person name="Wang W."/>
            <person name="Wang J."/>
            <person name="Qian W."/>
            <person name="Li D."/>
            <person name="Wang L."/>
        </authorList>
    </citation>
    <scope>NUCLEOTIDE SEQUENCE [LARGE SCALE GENOMIC DNA]</scope>
    <source>
        <strain>M66-2</strain>
    </source>
</reference>
<protein>
    <recommendedName>
        <fullName evidence="1">Argininosuccinate lyase</fullName>
        <shortName evidence="1">ASAL</shortName>
        <ecNumber evidence="1">4.3.2.1</ecNumber>
    </recommendedName>
    <alternativeName>
        <fullName evidence="1">Arginosuccinase</fullName>
    </alternativeName>
</protein>
<sequence>MALWGGRFTQAADSRFKSFNDSLRFDYRLAEQDIVGSIAWSKALVSVNVLSVQEQQQLEQALNHLLQSVQQDPEQILASDAEDIHSWVEQKLIEQVGDLGKKLHTGRSRNDQVATDLKLWCRDQGVHLLLALKTLQQQLVAVAAEHQSTVLPGYTHLQRAQPVTFTHWCLAYLEMFERDESRLTDALARLNTSPLGSGALAGTAYAIDREVLAADLGFTRATRNSLDAVSDRDHVMELMSVASISMLHLSRLAEDMIFYTTGEAGFIELADTVTSGSSLMPQKKNPDALELIRGKTGRVYGALAGMMMTVKALPLAYNKDMQEDKEGLFDALDTWFDCLQMAGLCFDGIKVNAARTLEAAKQGYSNATELADYLVAKGIPFREAHHIVGVAVVAAIGKGVALEELCLAELQQFSPLIEQDVYPILTIESCLEKRCALGGVSPKQVAHALQQAQARVKS</sequence>
<dbReference type="EC" id="4.3.2.1" evidence="1"/>
<dbReference type="EMBL" id="CP001233">
    <property type="protein sequence ID" value="ACP06857.1"/>
    <property type="molecule type" value="Genomic_DNA"/>
</dbReference>
<dbReference type="RefSeq" id="WP_001240133.1">
    <property type="nucleotide sequence ID" value="NC_012578.1"/>
</dbReference>
<dbReference type="SMR" id="C3LRV2"/>
<dbReference type="KEGG" id="vcm:VCM66_2561"/>
<dbReference type="HOGENOM" id="CLU_027272_2_3_6"/>
<dbReference type="UniPathway" id="UPA00068">
    <property type="reaction ID" value="UER00114"/>
</dbReference>
<dbReference type="Proteomes" id="UP000001217">
    <property type="component" value="Chromosome I"/>
</dbReference>
<dbReference type="GO" id="GO:0005829">
    <property type="term" value="C:cytosol"/>
    <property type="evidence" value="ECO:0007669"/>
    <property type="project" value="TreeGrafter"/>
</dbReference>
<dbReference type="GO" id="GO:0004056">
    <property type="term" value="F:argininosuccinate lyase activity"/>
    <property type="evidence" value="ECO:0007669"/>
    <property type="project" value="UniProtKB-UniRule"/>
</dbReference>
<dbReference type="GO" id="GO:0042450">
    <property type="term" value="P:arginine biosynthetic process via ornithine"/>
    <property type="evidence" value="ECO:0007669"/>
    <property type="project" value="InterPro"/>
</dbReference>
<dbReference type="GO" id="GO:0006526">
    <property type="term" value="P:L-arginine biosynthetic process"/>
    <property type="evidence" value="ECO:0007669"/>
    <property type="project" value="UniProtKB-UniRule"/>
</dbReference>
<dbReference type="CDD" id="cd01359">
    <property type="entry name" value="Argininosuccinate_lyase"/>
    <property type="match status" value="1"/>
</dbReference>
<dbReference type="FunFam" id="1.10.40.30:FF:000001">
    <property type="entry name" value="Argininosuccinate lyase"/>
    <property type="match status" value="1"/>
</dbReference>
<dbReference type="FunFam" id="1.20.200.10:FF:000006">
    <property type="entry name" value="Argininosuccinate lyase"/>
    <property type="match status" value="1"/>
</dbReference>
<dbReference type="Gene3D" id="1.10.40.30">
    <property type="entry name" value="Fumarase/aspartase (C-terminal domain)"/>
    <property type="match status" value="1"/>
</dbReference>
<dbReference type="Gene3D" id="1.20.200.10">
    <property type="entry name" value="Fumarase/aspartase (Central domain)"/>
    <property type="match status" value="1"/>
</dbReference>
<dbReference type="Gene3D" id="1.10.275.10">
    <property type="entry name" value="Fumarase/aspartase (N-terminal domain)"/>
    <property type="match status" value="1"/>
</dbReference>
<dbReference type="HAMAP" id="MF_00006">
    <property type="entry name" value="Arg_succ_lyase"/>
    <property type="match status" value="1"/>
</dbReference>
<dbReference type="InterPro" id="IPR029419">
    <property type="entry name" value="Arg_succ_lyase_C"/>
</dbReference>
<dbReference type="InterPro" id="IPR009049">
    <property type="entry name" value="Argininosuccinate_lyase"/>
</dbReference>
<dbReference type="InterPro" id="IPR024083">
    <property type="entry name" value="Fumarase/histidase_N"/>
</dbReference>
<dbReference type="InterPro" id="IPR020557">
    <property type="entry name" value="Fumarate_lyase_CS"/>
</dbReference>
<dbReference type="InterPro" id="IPR000362">
    <property type="entry name" value="Fumarate_lyase_fam"/>
</dbReference>
<dbReference type="InterPro" id="IPR022761">
    <property type="entry name" value="Fumarate_lyase_N"/>
</dbReference>
<dbReference type="InterPro" id="IPR008948">
    <property type="entry name" value="L-Aspartase-like"/>
</dbReference>
<dbReference type="NCBIfam" id="TIGR00838">
    <property type="entry name" value="argH"/>
    <property type="match status" value="1"/>
</dbReference>
<dbReference type="NCBIfam" id="NF008964">
    <property type="entry name" value="PRK12308.1"/>
    <property type="match status" value="1"/>
</dbReference>
<dbReference type="PANTHER" id="PTHR43814">
    <property type="entry name" value="ARGININOSUCCINATE LYASE"/>
    <property type="match status" value="1"/>
</dbReference>
<dbReference type="PANTHER" id="PTHR43814:SF1">
    <property type="entry name" value="ARGININOSUCCINATE LYASE"/>
    <property type="match status" value="1"/>
</dbReference>
<dbReference type="Pfam" id="PF14698">
    <property type="entry name" value="ASL_C2"/>
    <property type="match status" value="1"/>
</dbReference>
<dbReference type="Pfam" id="PF00206">
    <property type="entry name" value="Lyase_1"/>
    <property type="match status" value="1"/>
</dbReference>
<dbReference type="PRINTS" id="PR00145">
    <property type="entry name" value="ARGSUCLYASE"/>
</dbReference>
<dbReference type="PRINTS" id="PR00149">
    <property type="entry name" value="FUMRATELYASE"/>
</dbReference>
<dbReference type="SUPFAM" id="SSF48557">
    <property type="entry name" value="L-aspartase-like"/>
    <property type="match status" value="1"/>
</dbReference>
<dbReference type="PROSITE" id="PS00163">
    <property type="entry name" value="FUMARATE_LYASES"/>
    <property type="match status" value="1"/>
</dbReference>